<feature type="chain" id="PRO_0000245370" description="Uncharacterized protein YER053C-A">
    <location>
        <begin position="1"/>
        <end position="37"/>
    </location>
</feature>
<feature type="transmembrane region" description="Helical" evidence="1">
    <location>
        <begin position="1"/>
        <end position="21"/>
    </location>
</feature>
<keyword id="KW-0256">Endoplasmic reticulum</keyword>
<keyword id="KW-0472">Membrane</keyword>
<keyword id="KW-1185">Reference proteome</keyword>
<keyword id="KW-0812">Transmembrane</keyword>
<keyword id="KW-1133">Transmembrane helix</keyword>
<evidence type="ECO:0000255" key="1"/>
<evidence type="ECO:0000269" key="2">
    <source>
    </source>
</evidence>
<evidence type="ECO:0000305" key="3"/>
<reference key="1">
    <citation type="journal article" date="1997" name="Nature">
        <title>The nucleotide sequence of Saccharomyces cerevisiae chromosome V.</title>
        <authorList>
            <person name="Dietrich F.S."/>
            <person name="Mulligan J.T."/>
            <person name="Hennessy K.M."/>
            <person name="Yelton M.A."/>
            <person name="Allen E."/>
            <person name="Araujo R."/>
            <person name="Aviles E."/>
            <person name="Berno A."/>
            <person name="Brennan T."/>
            <person name="Carpenter J."/>
            <person name="Chen E."/>
            <person name="Cherry J.M."/>
            <person name="Chung E."/>
            <person name="Duncan M."/>
            <person name="Guzman E."/>
            <person name="Hartzell G."/>
            <person name="Hunicke-Smith S."/>
            <person name="Hyman R.W."/>
            <person name="Kayser A."/>
            <person name="Komp C."/>
            <person name="Lashkari D."/>
            <person name="Lew H."/>
            <person name="Lin D."/>
            <person name="Mosedale D."/>
            <person name="Nakahara K."/>
            <person name="Namath A."/>
            <person name="Norgren R."/>
            <person name="Oefner P."/>
            <person name="Oh C."/>
            <person name="Petel F.X."/>
            <person name="Roberts D."/>
            <person name="Sehl P."/>
            <person name="Schramm S."/>
            <person name="Shogren T."/>
            <person name="Smith V."/>
            <person name="Taylor P."/>
            <person name="Wei Y."/>
            <person name="Botstein D."/>
            <person name="Davis R.W."/>
        </authorList>
    </citation>
    <scope>NUCLEOTIDE SEQUENCE [LARGE SCALE GENOMIC DNA]</scope>
    <source>
        <strain>ATCC 204508 / S288c</strain>
    </source>
</reference>
<reference key="2">
    <citation type="journal article" date="2014" name="G3 (Bethesda)">
        <title>The reference genome sequence of Saccharomyces cerevisiae: Then and now.</title>
        <authorList>
            <person name="Engel S.R."/>
            <person name="Dietrich F.S."/>
            <person name="Fisk D.G."/>
            <person name="Binkley G."/>
            <person name="Balakrishnan R."/>
            <person name="Costanzo M.C."/>
            <person name="Dwight S.S."/>
            <person name="Hitz B.C."/>
            <person name="Karra K."/>
            <person name="Nash R.S."/>
            <person name="Weng S."/>
            <person name="Wong E.D."/>
            <person name="Lloyd P."/>
            <person name="Skrzypek M.S."/>
            <person name="Miyasato S.R."/>
            <person name="Simison M."/>
            <person name="Cherry J.M."/>
        </authorList>
    </citation>
    <scope>GENOME REANNOTATION</scope>
    <source>
        <strain>ATCC 204508 / S288c</strain>
    </source>
</reference>
<reference key="3">
    <citation type="journal article" date="1997" name="Nucleic Acids Res.">
        <title>Analysis of the yeast genome: identification of new non-coding and small ORF-containing RNAs.</title>
        <authorList>
            <person name="Olivas W.M."/>
            <person name="Muhlrad D."/>
            <person name="Parker R."/>
        </authorList>
    </citation>
    <scope>GENOME REANNOTATION</scope>
</reference>
<reference key="4">
    <citation type="journal article" date="2003" name="Nature">
        <title>Global analysis of protein localization in budding yeast.</title>
        <authorList>
            <person name="Huh W.-K."/>
            <person name="Falvo J.V."/>
            <person name="Gerke L.C."/>
            <person name="Carroll A.S."/>
            <person name="Howson R.W."/>
            <person name="Weissman J.S."/>
            <person name="O'Shea E.K."/>
        </authorList>
    </citation>
    <scope>SUBCELLULAR LOCATION [LARGE SCALE ANALYSIS]</scope>
</reference>
<reference key="5">
    <citation type="journal article" date="2003" name="Nature">
        <title>Global analysis of protein expression in yeast.</title>
        <authorList>
            <person name="Ghaemmaghami S."/>
            <person name="Huh W.-K."/>
            <person name="Bower K."/>
            <person name="Howson R.W."/>
            <person name="Belle A."/>
            <person name="Dephoure N."/>
            <person name="O'Shea E.K."/>
            <person name="Weissman J.S."/>
        </authorList>
    </citation>
    <scope>LEVEL OF PROTEIN EXPRESSION [LARGE SCALE ANALYSIS]</scope>
</reference>
<protein>
    <recommendedName>
        <fullName>Uncharacterized protein YER053C-A</fullName>
    </recommendedName>
</protein>
<gene>
    <name type="ordered locus">YER053C-A</name>
</gene>
<organism>
    <name type="scientific">Saccharomyces cerevisiae (strain ATCC 204508 / S288c)</name>
    <name type="common">Baker's yeast</name>
    <dbReference type="NCBI Taxonomy" id="559292"/>
    <lineage>
        <taxon>Eukaryota</taxon>
        <taxon>Fungi</taxon>
        <taxon>Dikarya</taxon>
        <taxon>Ascomycota</taxon>
        <taxon>Saccharomycotina</taxon>
        <taxon>Saccharomycetes</taxon>
        <taxon>Saccharomycetales</taxon>
        <taxon>Saccharomycetaceae</taxon>
        <taxon>Saccharomyces</taxon>
    </lineage>
</organism>
<dbReference type="EMBL" id="U18813">
    <property type="status" value="NOT_ANNOTATED_CDS"/>
    <property type="molecule type" value="Genomic_DNA"/>
</dbReference>
<dbReference type="EMBL" id="BK006939">
    <property type="protein sequence ID" value="DAA07710.1"/>
    <property type="molecule type" value="Genomic_DNA"/>
</dbReference>
<dbReference type="RefSeq" id="NP_061492.1">
    <property type="nucleotide sequence ID" value="NM_001184444.1"/>
</dbReference>
<dbReference type="BioGRID" id="36793">
    <property type="interactions" value="36"/>
</dbReference>
<dbReference type="FunCoup" id="Q3E7B0">
    <property type="interactions" value="35"/>
</dbReference>
<dbReference type="STRING" id="4932.YER053C-A"/>
<dbReference type="PaxDb" id="4932-YER053C-A"/>
<dbReference type="EnsemblFungi" id="YER053C-A_mRNA">
    <property type="protein sequence ID" value="YER053C-A"/>
    <property type="gene ID" value="YER053C-A"/>
</dbReference>
<dbReference type="GeneID" id="856780"/>
<dbReference type="KEGG" id="sce:YER053C-A"/>
<dbReference type="AGR" id="SGD:S000007523"/>
<dbReference type="SGD" id="S000007523">
    <property type="gene designation" value="YER053C-A"/>
</dbReference>
<dbReference type="VEuPathDB" id="FungiDB:YER053C-A"/>
<dbReference type="eggNOG" id="ENOG502SGS8">
    <property type="taxonomic scope" value="Eukaryota"/>
</dbReference>
<dbReference type="HOGENOM" id="CLU_219857_0_0_1"/>
<dbReference type="InParanoid" id="Q3E7B0"/>
<dbReference type="OrthoDB" id="4038871at2759"/>
<dbReference type="BioCyc" id="YEAST:G3O-30390-MONOMER"/>
<dbReference type="PRO" id="PR:Q3E7B0"/>
<dbReference type="Proteomes" id="UP000002311">
    <property type="component" value="Chromosome V"/>
</dbReference>
<dbReference type="GO" id="GO:0005783">
    <property type="term" value="C:endoplasmic reticulum"/>
    <property type="evidence" value="ECO:0007005"/>
    <property type="project" value="SGD"/>
</dbReference>
<dbReference type="GO" id="GO:0005789">
    <property type="term" value="C:endoplasmic reticulum membrane"/>
    <property type="evidence" value="ECO:0007669"/>
    <property type="project" value="UniProtKB-SubCell"/>
</dbReference>
<sequence>MQDLEIFLSIFAFIFVFYFGAHRTVMNRNKSDVPYLQ</sequence>
<proteinExistence type="evidence at protein level"/>
<comment type="subcellular location">
    <subcellularLocation>
        <location evidence="3">Endoplasmic reticulum membrane</location>
        <topology evidence="3">Single-pass membrane protein</topology>
    </subcellularLocation>
</comment>
<comment type="miscellaneous">
    <text evidence="2">Present with 2440 molecules/cell in log phase SD medium.</text>
</comment>
<name>YE053_YEAST</name>
<accession>Q3E7B0</accession>
<accession>D3DLV6</accession>